<name>SSB1_STRP6</name>
<reference key="1">
    <citation type="journal article" date="2004" name="J. Infect. Dis.">
        <title>Progress toward characterization of the group A Streptococcus metagenome: complete genome sequence of a macrolide-resistant serotype M6 strain.</title>
        <authorList>
            <person name="Banks D.J."/>
            <person name="Porcella S.F."/>
            <person name="Barbian K.D."/>
            <person name="Beres S.B."/>
            <person name="Philips L.E."/>
            <person name="Voyich J.M."/>
            <person name="DeLeo F.R."/>
            <person name="Martin J.M."/>
            <person name="Somerville G.A."/>
            <person name="Musser J.M."/>
        </authorList>
    </citation>
    <scope>NUCLEOTIDE SEQUENCE [LARGE SCALE GENOMIC DNA]</scope>
    <source>
        <strain>ATCC BAA-946 / MGAS10394</strain>
    </source>
</reference>
<evidence type="ECO:0000255" key="1">
    <source>
        <dbReference type="HAMAP-Rule" id="MF_00984"/>
    </source>
</evidence>
<keyword id="KW-0238">DNA-binding</keyword>
<organism>
    <name type="scientific">Streptococcus pyogenes serotype M6 (strain ATCC BAA-946 / MGAS10394)</name>
    <dbReference type="NCBI Taxonomy" id="286636"/>
    <lineage>
        <taxon>Bacteria</taxon>
        <taxon>Bacillati</taxon>
        <taxon>Bacillota</taxon>
        <taxon>Bacilli</taxon>
        <taxon>Lactobacillales</taxon>
        <taxon>Streptococcaceae</taxon>
        <taxon>Streptococcus</taxon>
    </lineage>
</organism>
<accession>Q5XE77</accession>
<gene>
    <name type="primary">ssb1</name>
    <name type="ordered locus">M6_Spy0151</name>
</gene>
<feature type="chain" id="PRO_0000096120" description="Single-stranded DNA-binding protein 1">
    <location>
        <begin position="1"/>
        <end position="131"/>
    </location>
</feature>
<feature type="domain" description="SSB" evidence="1">
    <location>
        <begin position="1"/>
        <end position="103"/>
    </location>
</feature>
<sequence>MYNKVIAIGRLVAKPELVKTATDKHVARLSLAVNRRFKNASGEREADFISVVVWGKLAETLVSYASKGSLMSIDGELRTRKYDKDGQVHYVTEVLCQSFQLLESRAQRAMRENNVTNDLVDLVLEEDTLPF</sequence>
<protein>
    <recommendedName>
        <fullName evidence="1">Single-stranded DNA-binding protein 1</fullName>
        <shortName evidence="1">SSB 1</shortName>
    </recommendedName>
</protein>
<proteinExistence type="inferred from homology"/>
<comment type="subunit">
    <text evidence="1">Homotetramer.</text>
</comment>
<dbReference type="EMBL" id="CP000003">
    <property type="protein sequence ID" value="AAT86286.1"/>
    <property type="molecule type" value="Genomic_DNA"/>
</dbReference>
<dbReference type="RefSeq" id="WP_003053955.1">
    <property type="nucleotide sequence ID" value="NC_006086.1"/>
</dbReference>
<dbReference type="SMR" id="Q5XE77"/>
<dbReference type="KEGG" id="spa:M6_Spy0151"/>
<dbReference type="HOGENOM" id="CLU_078758_6_1_9"/>
<dbReference type="Proteomes" id="UP000001167">
    <property type="component" value="Chromosome"/>
</dbReference>
<dbReference type="GO" id="GO:0009295">
    <property type="term" value="C:nucleoid"/>
    <property type="evidence" value="ECO:0007669"/>
    <property type="project" value="TreeGrafter"/>
</dbReference>
<dbReference type="GO" id="GO:0003697">
    <property type="term" value="F:single-stranded DNA binding"/>
    <property type="evidence" value="ECO:0007669"/>
    <property type="project" value="UniProtKB-UniRule"/>
</dbReference>
<dbReference type="GO" id="GO:0006260">
    <property type="term" value="P:DNA replication"/>
    <property type="evidence" value="ECO:0007669"/>
    <property type="project" value="InterPro"/>
</dbReference>
<dbReference type="CDD" id="cd04496">
    <property type="entry name" value="SSB_OBF"/>
    <property type="match status" value="1"/>
</dbReference>
<dbReference type="Gene3D" id="2.40.50.140">
    <property type="entry name" value="Nucleic acid-binding proteins"/>
    <property type="match status" value="1"/>
</dbReference>
<dbReference type="HAMAP" id="MF_00984">
    <property type="entry name" value="SSB"/>
    <property type="match status" value="1"/>
</dbReference>
<dbReference type="InterPro" id="IPR012340">
    <property type="entry name" value="NA-bd_OB-fold"/>
</dbReference>
<dbReference type="InterPro" id="IPR000424">
    <property type="entry name" value="Primosome_PriB/ssb"/>
</dbReference>
<dbReference type="InterPro" id="IPR011344">
    <property type="entry name" value="ssDNA-bd"/>
</dbReference>
<dbReference type="NCBIfam" id="NF005579">
    <property type="entry name" value="PRK07274.1"/>
    <property type="match status" value="1"/>
</dbReference>
<dbReference type="NCBIfam" id="TIGR00621">
    <property type="entry name" value="ssb"/>
    <property type="match status" value="1"/>
</dbReference>
<dbReference type="PANTHER" id="PTHR10302">
    <property type="entry name" value="SINGLE-STRANDED DNA-BINDING PROTEIN"/>
    <property type="match status" value="1"/>
</dbReference>
<dbReference type="PANTHER" id="PTHR10302:SF27">
    <property type="entry name" value="SINGLE-STRANDED DNA-BINDING PROTEIN"/>
    <property type="match status" value="1"/>
</dbReference>
<dbReference type="Pfam" id="PF00436">
    <property type="entry name" value="SSB"/>
    <property type="match status" value="1"/>
</dbReference>
<dbReference type="PIRSF" id="PIRSF002070">
    <property type="entry name" value="SSB"/>
    <property type="match status" value="1"/>
</dbReference>
<dbReference type="SUPFAM" id="SSF50249">
    <property type="entry name" value="Nucleic acid-binding proteins"/>
    <property type="match status" value="1"/>
</dbReference>
<dbReference type="PROSITE" id="PS50935">
    <property type="entry name" value="SSB"/>
    <property type="match status" value="1"/>
</dbReference>